<sequence>MGLEKLTWVSEKKPDWSNVQKLIAACEATNQYTNIGPIISQLESFIRDSFLIEESKAVIVTSNGTSALHALVGGINRQLGRELKFVTQSFTFPSSNQGPLKDSIIVDIDEDGGLDLNAVKNIEYDGIIVTNIHGNVVDINKYVDFCMNHNKLLIFDNAATGYTFYLGKNSCNYGHASIISFHHTKPFGFGEGGCIIVDRLYENNIRIGLNFGLDNSLGEKSQYSNQASNYRMCDLNAAFILSYLQNNYKKIINRHSEIYEIYKNNLPKRFKLFPNHSKKNPVCSSICLLFDKPFRLDKIPFLSRKYYKPLDLSSPVSLDFYQRILCIPCNIDLTDRQIYEIIGVLNEFADKN</sequence>
<protein>
    <recommendedName>
        <fullName>Uncharacterized protein L136</fullName>
    </recommendedName>
</protein>
<keyword id="KW-0002">3D-structure</keyword>
<keyword id="KW-1185">Reference proteome</keyword>
<feature type="chain" id="PRO_0000253225" description="Uncharacterized protein L136">
    <location>
        <begin position="1"/>
        <end position="352"/>
    </location>
</feature>
<feature type="helix" evidence="2">
    <location>
        <begin position="3"/>
        <end position="5"/>
    </location>
</feature>
<feature type="helix" evidence="1">
    <location>
        <begin position="16"/>
        <end position="29"/>
    </location>
</feature>
<feature type="strand" evidence="1">
    <location>
        <begin position="33"/>
        <end position="35"/>
    </location>
</feature>
<feature type="helix" evidence="1">
    <location>
        <begin position="39"/>
        <end position="50"/>
    </location>
</feature>
<feature type="strand" evidence="1">
    <location>
        <begin position="56"/>
        <end position="63"/>
    </location>
</feature>
<feature type="helix" evidence="1">
    <location>
        <begin position="64"/>
        <end position="79"/>
    </location>
</feature>
<feature type="strand" evidence="1">
    <location>
        <begin position="85"/>
        <end position="91"/>
    </location>
</feature>
<feature type="helix" evidence="1">
    <location>
        <begin position="93"/>
        <end position="96"/>
    </location>
</feature>
<feature type="helix" evidence="1">
    <location>
        <begin position="98"/>
        <end position="100"/>
    </location>
</feature>
<feature type="strand" evidence="1">
    <location>
        <begin position="104"/>
        <end position="106"/>
    </location>
</feature>
<feature type="strand" evidence="1">
    <location>
        <begin position="112"/>
        <end position="114"/>
    </location>
</feature>
<feature type="helix" evidence="1">
    <location>
        <begin position="116"/>
        <end position="119"/>
    </location>
</feature>
<feature type="strand" evidence="1">
    <location>
        <begin position="125"/>
        <end position="130"/>
    </location>
</feature>
<feature type="helix" evidence="1">
    <location>
        <begin position="132"/>
        <end position="134"/>
    </location>
</feature>
<feature type="helix" evidence="1">
    <location>
        <begin position="139"/>
        <end position="149"/>
    </location>
</feature>
<feature type="strand" evidence="1">
    <location>
        <begin position="152"/>
        <end position="156"/>
    </location>
</feature>
<feature type="helix" evidence="1">
    <location>
        <begin position="170"/>
        <end position="172"/>
    </location>
</feature>
<feature type="strand" evidence="1">
    <location>
        <begin position="173"/>
        <end position="180"/>
    </location>
</feature>
<feature type="strand" evidence="1">
    <location>
        <begin position="189"/>
        <end position="191"/>
    </location>
</feature>
<feature type="strand" evidence="1">
    <location>
        <begin position="193"/>
        <end position="198"/>
    </location>
</feature>
<feature type="helix" evidence="1">
    <location>
        <begin position="199"/>
        <end position="201"/>
    </location>
</feature>
<feature type="helix" evidence="1">
    <location>
        <begin position="202"/>
        <end position="208"/>
    </location>
</feature>
<feature type="helix" evidence="1">
    <location>
        <begin position="215"/>
        <end position="220"/>
    </location>
</feature>
<feature type="helix" evidence="1">
    <location>
        <begin position="234"/>
        <end position="264"/>
    </location>
</feature>
<feature type="strand" evidence="1">
    <location>
        <begin position="270"/>
        <end position="272"/>
    </location>
</feature>
<feature type="strand" evidence="1">
    <location>
        <begin position="284"/>
        <end position="292"/>
    </location>
</feature>
<feature type="helix" evidence="1">
    <location>
        <begin position="296"/>
        <end position="298"/>
    </location>
</feature>
<feature type="helix" evidence="1">
    <location>
        <begin position="315"/>
        <end position="323"/>
    </location>
</feature>
<feature type="strand" evidence="1">
    <location>
        <begin position="324"/>
        <end position="327"/>
    </location>
</feature>
<feature type="helix" evidence="1">
    <location>
        <begin position="335"/>
        <end position="351"/>
    </location>
</feature>
<reference key="1">
    <citation type="journal article" date="2004" name="Science">
        <title>The 1.2-megabase genome sequence of Mimivirus.</title>
        <authorList>
            <person name="Raoult D."/>
            <person name="Audic S."/>
            <person name="Robert C."/>
            <person name="Abergel C."/>
            <person name="Renesto P."/>
            <person name="Ogata H."/>
            <person name="La Scola B."/>
            <person name="Susan M."/>
            <person name="Claverie J.-M."/>
        </authorList>
    </citation>
    <scope>NUCLEOTIDE SEQUENCE [LARGE SCALE GENOMIC DNA]</scope>
    <source>
        <strain>Rowbotham-Bradford</strain>
    </source>
</reference>
<gene>
    <name type="ordered locus">MIMI_L136</name>
</gene>
<dbReference type="EMBL" id="AY653733">
    <property type="protein sequence ID" value="AAV50411.1"/>
    <property type="molecule type" value="Genomic_DNA"/>
</dbReference>
<dbReference type="PDB" id="7MFO">
    <property type="method" value="X-ray"/>
    <property type="resolution" value="1.70 A"/>
    <property type="chains" value="A/B/C/D/E/F/G/H/I/J=1-352"/>
</dbReference>
<dbReference type="PDB" id="7MFP">
    <property type="method" value="X-ray"/>
    <property type="resolution" value="1.85 A"/>
    <property type="chains" value="A/B/C/D=1-352"/>
</dbReference>
<dbReference type="PDB" id="7MFQ">
    <property type="method" value="X-ray"/>
    <property type="resolution" value="1.95 A"/>
    <property type="chains" value="A/B/C/D=1-352"/>
</dbReference>
<dbReference type="PDBsum" id="7MFO"/>
<dbReference type="PDBsum" id="7MFP"/>
<dbReference type="PDBsum" id="7MFQ"/>
<dbReference type="SMR" id="Q5UPL1"/>
<dbReference type="KEGG" id="vg:9924736"/>
<dbReference type="Proteomes" id="UP000001134">
    <property type="component" value="Genome"/>
</dbReference>
<dbReference type="GO" id="GO:0030170">
    <property type="term" value="F:pyridoxal phosphate binding"/>
    <property type="evidence" value="ECO:0007669"/>
    <property type="project" value="TreeGrafter"/>
</dbReference>
<dbReference type="GO" id="GO:0008483">
    <property type="term" value="F:transaminase activity"/>
    <property type="evidence" value="ECO:0007669"/>
    <property type="project" value="TreeGrafter"/>
</dbReference>
<dbReference type="GO" id="GO:0000271">
    <property type="term" value="P:polysaccharide biosynthetic process"/>
    <property type="evidence" value="ECO:0007669"/>
    <property type="project" value="TreeGrafter"/>
</dbReference>
<dbReference type="Gene3D" id="3.40.640.10">
    <property type="entry name" value="Type I PLP-dependent aspartate aminotransferase-like (Major domain)"/>
    <property type="match status" value="1"/>
</dbReference>
<dbReference type="InterPro" id="IPR000653">
    <property type="entry name" value="DegT/StrS_aminotransferase"/>
</dbReference>
<dbReference type="InterPro" id="IPR015424">
    <property type="entry name" value="PyrdxlP-dep_Trfase"/>
</dbReference>
<dbReference type="InterPro" id="IPR015421">
    <property type="entry name" value="PyrdxlP-dep_Trfase_major"/>
</dbReference>
<dbReference type="PANTHER" id="PTHR30244:SF34">
    <property type="entry name" value="DTDP-4-AMINO-4,6-DIDEOXYGALACTOSE TRANSAMINASE"/>
    <property type="match status" value="1"/>
</dbReference>
<dbReference type="PANTHER" id="PTHR30244">
    <property type="entry name" value="TRANSAMINASE"/>
    <property type="match status" value="1"/>
</dbReference>
<dbReference type="Pfam" id="PF01041">
    <property type="entry name" value="DegT_DnrJ_EryC1"/>
    <property type="match status" value="1"/>
</dbReference>
<dbReference type="SUPFAM" id="SSF53383">
    <property type="entry name" value="PLP-dependent transferases"/>
    <property type="match status" value="1"/>
</dbReference>
<evidence type="ECO:0007829" key="1">
    <source>
        <dbReference type="PDB" id="7MFO"/>
    </source>
</evidence>
<evidence type="ECO:0007829" key="2">
    <source>
        <dbReference type="PDB" id="7MFP"/>
    </source>
</evidence>
<accession>Q5UPL1</accession>
<name>YL136_MIMIV</name>
<organism>
    <name type="scientific">Acanthamoeba polyphaga mimivirus</name>
    <name type="common">APMV</name>
    <dbReference type="NCBI Taxonomy" id="212035"/>
    <lineage>
        <taxon>Viruses</taxon>
        <taxon>Varidnaviria</taxon>
        <taxon>Bamfordvirae</taxon>
        <taxon>Nucleocytoviricota</taxon>
        <taxon>Megaviricetes</taxon>
        <taxon>Imitervirales</taxon>
        <taxon>Mimiviridae</taxon>
        <taxon>Megamimivirinae</taxon>
        <taxon>Mimivirus</taxon>
        <taxon>Mimivirus bradfordmassiliense</taxon>
    </lineage>
</organism>
<proteinExistence type="evidence at protein level"/>
<organismHost>
    <name type="scientific">Acanthamoeba polyphaga</name>
    <name type="common">Amoeba</name>
    <dbReference type="NCBI Taxonomy" id="5757"/>
</organismHost>